<protein>
    <recommendedName>
        <fullName evidence="1">Large ribosomal subunit protein eL32</fullName>
    </recommendedName>
    <alternativeName>
        <fullName>60S ribosomal protein L32</fullName>
    </alternativeName>
    <alternativeName>
        <fullName>Ribosomal protein 49</fullName>
    </alternativeName>
</protein>
<accession>Q94460</accession>
<reference key="1">
    <citation type="submission" date="1996-09" db="EMBL/GenBank/DDBJ databases">
        <authorList>
            <person name="Fogleman J.C."/>
            <person name="McMahill M.S."/>
            <person name="Danielson P.B."/>
        </authorList>
    </citation>
    <scope>NUCLEOTIDE SEQUENCE [MRNA]</scope>
    <source>
        <strain>A584.2</strain>
    </source>
</reference>
<evidence type="ECO:0000305" key="1"/>
<feature type="chain" id="PRO_0000131122" description="Large ribosomal subunit protein eL32">
    <location>
        <begin position="1"/>
        <end position="134"/>
    </location>
</feature>
<keyword id="KW-0687">Ribonucleoprotein</keyword>
<keyword id="KW-0689">Ribosomal protein</keyword>
<organism>
    <name type="scientific">Drosophila acanthoptera</name>
    <name type="common">Fruit fly</name>
    <dbReference type="NCBI Taxonomy" id="51166"/>
    <lineage>
        <taxon>Eukaryota</taxon>
        <taxon>Metazoa</taxon>
        <taxon>Ecdysozoa</taxon>
        <taxon>Arthropoda</taxon>
        <taxon>Hexapoda</taxon>
        <taxon>Insecta</taxon>
        <taxon>Pterygota</taxon>
        <taxon>Neoptera</taxon>
        <taxon>Endopterygota</taxon>
        <taxon>Diptera</taxon>
        <taxon>Brachycera</taxon>
        <taxon>Muscomorpha</taxon>
        <taxon>Ephydroidea</taxon>
        <taxon>Drosophilidae</taxon>
        <taxon>Drosophila</taxon>
    </lineage>
</organism>
<dbReference type="EMBL" id="U66458">
    <property type="protein sequence ID" value="AAB07488.1"/>
    <property type="molecule type" value="mRNA"/>
</dbReference>
<dbReference type="SMR" id="Q94460"/>
<dbReference type="GO" id="GO:0022625">
    <property type="term" value="C:cytosolic large ribosomal subunit"/>
    <property type="evidence" value="ECO:0007669"/>
    <property type="project" value="TreeGrafter"/>
</dbReference>
<dbReference type="GO" id="GO:0003735">
    <property type="term" value="F:structural constituent of ribosome"/>
    <property type="evidence" value="ECO:0007669"/>
    <property type="project" value="InterPro"/>
</dbReference>
<dbReference type="GO" id="GO:0006412">
    <property type="term" value="P:translation"/>
    <property type="evidence" value="ECO:0007669"/>
    <property type="project" value="InterPro"/>
</dbReference>
<dbReference type="CDD" id="cd00513">
    <property type="entry name" value="Ribosomal_L32_L32e"/>
    <property type="match status" value="1"/>
</dbReference>
<dbReference type="InterPro" id="IPR001515">
    <property type="entry name" value="Ribosomal_eL32"/>
</dbReference>
<dbReference type="InterPro" id="IPR018263">
    <property type="entry name" value="Ribosomal_eL32_CS"/>
</dbReference>
<dbReference type="InterPro" id="IPR036351">
    <property type="entry name" value="Ribosomal_eL32_sf"/>
</dbReference>
<dbReference type="PANTHER" id="PTHR23413">
    <property type="entry name" value="60S RIBOSOMAL PROTEIN L32 AND DNA-DIRECTED RNA POLYMERASE II, SUBUNIT N"/>
    <property type="match status" value="1"/>
</dbReference>
<dbReference type="PANTHER" id="PTHR23413:SF1">
    <property type="entry name" value="RIBOSOMAL PROTEIN L32"/>
    <property type="match status" value="1"/>
</dbReference>
<dbReference type="Pfam" id="PF01655">
    <property type="entry name" value="Ribosomal_L32e"/>
    <property type="match status" value="1"/>
</dbReference>
<dbReference type="SMART" id="SM01393">
    <property type="entry name" value="Ribosomal_L32e"/>
    <property type="match status" value="1"/>
</dbReference>
<dbReference type="SUPFAM" id="SSF52042">
    <property type="entry name" value="Ribosomal protein L32e"/>
    <property type="match status" value="1"/>
</dbReference>
<dbReference type="PROSITE" id="PS00580">
    <property type="entry name" value="RIBOSOMAL_L32E"/>
    <property type="match status" value="1"/>
</dbReference>
<name>RL32_DROAC</name>
<gene>
    <name type="primary">RpL32</name>
    <name type="synonym">M(3)99D</name>
    <name type="synonym">rp49</name>
</gene>
<comment type="similarity">
    <text evidence="1">Belongs to the eukaryotic ribosomal protein eL32 family.</text>
</comment>
<sequence>MTIRPAYRPKIVKKRTKHFIRHQSDRYAKLSHKWRKPKGIDNRVRRRFKGQYLMPNIGYGSNKRTRHMLPTGFKKFLVHNVRELEVLLMQNREYCGEIAHGVSSNKRKEIVERAKQLSVRLTNPNARLRSQENE</sequence>
<proteinExistence type="evidence at transcript level"/>